<comment type="function">
    <text evidence="3 4">Beta-mannosyltransferase involved in cell wall biosynthesis. Required for beta-1,2-mannose transfer on phospholipomannan. Required for pro-inflammatory response in macrophages through phospholipomannan-induced TNF-alpha production.</text>
</comment>
<comment type="subcellular location">
    <subcellularLocation>
        <location evidence="5">Membrane</location>
        <topology evidence="5">Single-pass type II membrane protein</topology>
    </subcellularLocation>
</comment>
<comment type="induction">
    <text evidence="2">Expression is induced in biofilm.</text>
</comment>
<comment type="disruption phenotype">
    <text evidence="4">Leads to the production of phospholipomannan with short truncated oligomannosidic chain and impairs induction of TNF-alpha production in macrophages.</text>
</comment>
<comment type="similarity">
    <text evidence="5">Belongs to the BMT family.</text>
</comment>
<accession>Q5ABU8</accession>
<accession>A0A1D8PQ28</accession>
<accession>Q5AC72</accession>
<reference key="1">
    <citation type="journal article" date="2004" name="Proc. Natl. Acad. Sci. U.S.A.">
        <title>The diploid genome sequence of Candida albicans.</title>
        <authorList>
            <person name="Jones T."/>
            <person name="Federspiel N.A."/>
            <person name="Chibana H."/>
            <person name="Dungan J."/>
            <person name="Kalman S."/>
            <person name="Magee B.B."/>
            <person name="Newport G."/>
            <person name="Thorstenson Y.R."/>
            <person name="Agabian N."/>
            <person name="Magee P.T."/>
            <person name="Davis R.W."/>
            <person name="Scherer S."/>
        </authorList>
    </citation>
    <scope>NUCLEOTIDE SEQUENCE [LARGE SCALE GENOMIC DNA]</scope>
    <source>
        <strain>SC5314 / ATCC MYA-2876</strain>
    </source>
</reference>
<reference key="2">
    <citation type="journal article" date="2007" name="Genome Biol.">
        <title>Assembly of the Candida albicans genome into sixteen supercontigs aligned on the eight chromosomes.</title>
        <authorList>
            <person name="van het Hoog M."/>
            <person name="Rast T.J."/>
            <person name="Martchenko M."/>
            <person name="Grindle S."/>
            <person name="Dignard D."/>
            <person name="Hogues H."/>
            <person name="Cuomo C."/>
            <person name="Berriman M."/>
            <person name="Scherer S."/>
            <person name="Magee B.B."/>
            <person name="Whiteway M."/>
            <person name="Chibana H."/>
            <person name="Nantel A."/>
            <person name="Magee P.T."/>
        </authorList>
    </citation>
    <scope>GENOME REANNOTATION</scope>
    <source>
        <strain>SC5314 / ATCC MYA-2876</strain>
    </source>
</reference>
<reference key="3">
    <citation type="journal article" date="2013" name="Genome Biol.">
        <title>Assembly of a phased diploid Candida albicans genome facilitates allele-specific measurements and provides a simple model for repeat and indel structure.</title>
        <authorList>
            <person name="Muzzey D."/>
            <person name="Schwartz K."/>
            <person name="Weissman J.S."/>
            <person name="Sherlock G."/>
        </authorList>
    </citation>
    <scope>NUCLEOTIDE SEQUENCE [LARGE SCALE GENOMIC DNA]</scope>
    <scope>GENOME REANNOTATION</scope>
    <source>
        <strain>SC5314 / ATCC MYA-2876</strain>
    </source>
</reference>
<reference key="4">
    <citation type="journal article" date="2008" name="J. Biol. Chem.">
        <title>Identification of a new family of genes involved in beta-1,2-mannosylation of glycans in Pichia pastoris and Candida albicans.</title>
        <authorList>
            <person name="Mille C."/>
            <person name="Bobrowicz P."/>
            <person name="Trinel P.A."/>
            <person name="Li H."/>
            <person name="Maes E."/>
            <person name="Guerardel Y."/>
            <person name="Fradin C."/>
            <person name="Martinez-Esparza M."/>
            <person name="Davidson R.C."/>
            <person name="Janbon G."/>
            <person name="Poulain D."/>
            <person name="Wildt S."/>
        </authorList>
    </citation>
    <scope>IDENTIFICATION</scope>
</reference>
<reference key="5">
    <citation type="journal article" date="2011" name="Mol. Microbiol.">
        <title>Contribution of the glycolytic flux and hypoxia adaptation to efficient biofilm formation by Candida albicans.</title>
        <authorList>
            <person name="Bonhomme J."/>
            <person name="Chauvel M."/>
            <person name="Goyard S."/>
            <person name="Roux P."/>
            <person name="Rossignol T."/>
            <person name="d'Enfert C."/>
        </authorList>
    </citation>
    <scope>INDUCTION</scope>
</reference>
<reference key="6">
    <citation type="journal article" date="2012" name="Glycobiology">
        <title>Members 5 and 6 of the Candida albicans BMT family encode enzymes acting specifically on beta-mannosylation of the phospholipomannan cell-wall glycosphingolipid.</title>
        <authorList>
            <person name="Mille C."/>
            <person name="Fradin C."/>
            <person name="Delplace F."/>
            <person name="Trinel P.A."/>
            <person name="Masset A."/>
            <person name="Francois N."/>
            <person name="Coddeville B."/>
            <person name="Bobrowicz P."/>
            <person name="Jouault T."/>
            <person name="Guerardel Y."/>
            <person name="Wildt S."/>
            <person name="Janbon G."/>
            <person name="Poulain D."/>
        </authorList>
    </citation>
    <scope>FUNCTION</scope>
</reference>
<reference key="7">
    <citation type="journal article" date="2013" name="PLoS ONE">
        <title>Deficient beta-mannosylation of Candida albicans phospholipomannan affects the proinflammatory response in macrophages.</title>
        <authorList>
            <person name="Devillers A."/>
            <person name="Courjol F."/>
            <person name="Fradin C."/>
            <person name="Coste A."/>
            <person name="Poulain D."/>
            <person name="Pipy B."/>
            <person name="Bernardes E.S."/>
            <person name="Jouault T."/>
        </authorList>
    </citation>
    <scope>FUNCTION</scope>
    <scope>DISRUPTION PHENOTYPE</scope>
</reference>
<feature type="chain" id="PRO_0000426074" description="Beta-mannosyltransferase 6">
    <location>
        <begin position="1"/>
        <end position="646"/>
    </location>
</feature>
<feature type="topological domain" description="Cytoplasmic" evidence="1">
    <location>
        <begin position="1"/>
        <end position="25"/>
    </location>
</feature>
<feature type="transmembrane region" description="Helical" evidence="1">
    <location>
        <begin position="26"/>
        <end position="46"/>
    </location>
</feature>
<feature type="topological domain" description="Extracellular" evidence="1">
    <location>
        <begin position="47"/>
        <end position="646"/>
    </location>
</feature>
<feature type="glycosylation site" description="N-linked (GlcNAc...) asparagine" evidence="1">
    <location>
        <position position="62"/>
    </location>
</feature>
<feature type="glycosylation site" description="N-linked (GlcNAc...) asparagine" evidence="1">
    <location>
        <position position="81"/>
    </location>
</feature>
<feature type="glycosylation site" description="N-linked (GlcNAc...) asparagine" evidence="1">
    <location>
        <position position="103"/>
    </location>
</feature>
<feature type="glycosylation site" description="N-linked (GlcNAc...) asparagine" evidence="1">
    <location>
        <position position="117"/>
    </location>
</feature>
<feature type="glycosylation site" description="N-linked (GlcNAc...) asparagine" evidence="1">
    <location>
        <position position="127"/>
    </location>
</feature>
<feature type="glycosylation site" description="N-linked (GlcNAc...) asparagine" evidence="1">
    <location>
        <position position="132"/>
    </location>
</feature>
<feature type="glycosylation site" description="N-linked (GlcNAc...) asparagine" evidence="1">
    <location>
        <position position="146"/>
    </location>
</feature>
<feature type="glycosylation site" description="N-linked (GlcNAc...) asparagine" evidence="1">
    <location>
        <position position="334"/>
    </location>
</feature>
<feature type="glycosylation site" description="N-linked (GlcNAc...) asparagine" evidence="1">
    <location>
        <position position="393"/>
    </location>
</feature>
<gene>
    <name type="primary">BMT6</name>
    <name type="synonym">WRY2</name>
    <name type="ordered locus">CAALFM_C603160CA</name>
    <name type="ORF">CaO19.13045</name>
    <name type="ORF">CaO19.5602</name>
</gene>
<proteinExistence type="evidence at transcript level"/>
<protein>
    <recommendedName>
        <fullName>Beta-mannosyltransferase 6</fullName>
        <ecNumber>2.4.1.-</ecNumber>
    </recommendedName>
    <alternativeName>
        <fullName>WRY family protein 2</fullName>
    </alternativeName>
</protein>
<sequence length="646" mass="74499">MGNYKPSIKQYVVTVKAIKSSQFGRLGICAVVLLFVLGYPFYFISNNPFDTSIRYQYVDPYNDTTRKYTTIEKQHTDIGGNGTTILYPKNLQLDQTALSQLLNTTETTNPFVQYIGNSSSIAFSQLNQTLVNHSIQVFDPFSNSDNCSDLMTETQLTISQNIIIKESFEIMVKRLMHQLDTEPAFKELAPFFQNKLSLHLRMRSYHKHFYKFARTSVWLKDYGVHLMISRVIYSQKGKKGDPQISLLYTQLYDTNWQELTNTDLLVSMQDITGEYKLEKLQFPRFLPMPFYYNPKLTKGRWYGPEDARIMLVKNQLDMEEPVVIYNSYHRQIANHTTTGKTDGSVELNFEFYRSMFVGWPFRYQLGKSNTDGFVDDRFDNVKFTRVAELKIHNQTRASIEKNWTPFVDPSERDPEDKSLYIVYQWDKLRILKCDISNLVTDDGFIHYSACRFKQDTKHDEVEKVGPIRGGTELIPTIINNKQLWVGFLRAHIDKCGCGKAMYRPNMVVLQKTDMGTFQVAYLSSYISFNIPVPGWKTHEIQCGKRDPNVLIPNGISNWEVATIDGIERDVLTMTLSAADEDNILMDIHGLKTVIKNLITNQKHGNEFNSDSVQMKCVVAYSIEFCRAYGEEQARLGLTGGWLPSHN</sequence>
<dbReference type="EC" id="2.4.1.-"/>
<dbReference type="EMBL" id="CP017628">
    <property type="protein sequence ID" value="AOW30247.1"/>
    <property type="molecule type" value="Genomic_DNA"/>
</dbReference>
<dbReference type="RefSeq" id="XP_719163.2">
    <property type="nucleotide sequence ID" value="XM_714070.2"/>
</dbReference>
<dbReference type="STRING" id="237561.Q5ABU8"/>
<dbReference type="CAZy" id="GT91">
    <property type="family name" value="Glycosyltransferase Family 91"/>
</dbReference>
<dbReference type="GlyCosmos" id="Q5ABU8">
    <property type="glycosylation" value="9 sites, No reported glycans"/>
</dbReference>
<dbReference type="EnsemblFungi" id="C6_03160C_A-T">
    <property type="protein sequence ID" value="C6_03160C_A-T-p1"/>
    <property type="gene ID" value="C6_03160C_A"/>
</dbReference>
<dbReference type="GeneID" id="3639258"/>
<dbReference type="KEGG" id="cal:CAALFM_C603160CA"/>
<dbReference type="CGD" id="CAL0000178153">
    <property type="gene designation" value="BMT6"/>
</dbReference>
<dbReference type="VEuPathDB" id="FungiDB:C6_03160C_A"/>
<dbReference type="eggNOG" id="ENOG502QTZG">
    <property type="taxonomic scope" value="Eukaryota"/>
</dbReference>
<dbReference type="HOGENOM" id="CLU_013841_1_0_1"/>
<dbReference type="InParanoid" id="Q5ABU8"/>
<dbReference type="OrthoDB" id="3631276at2759"/>
<dbReference type="PRO" id="PR:Q5ABU8"/>
<dbReference type="Proteomes" id="UP000000559">
    <property type="component" value="Chromosome 6"/>
</dbReference>
<dbReference type="GO" id="GO:0016020">
    <property type="term" value="C:membrane"/>
    <property type="evidence" value="ECO:0007669"/>
    <property type="project" value="UniProtKB-SubCell"/>
</dbReference>
<dbReference type="GO" id="GO:0000030">
    <property type="term" value="F:mannosyltransferase activity"/>
    <property type="evidence" value="ECO:0007669"/>
    <property type="project" value="InterPro"/>
</dbReference>
<dbReference type="GO" id="GO:0071555">
    <property type="term" value="P:cell wall organization"/>
    <property type="evidence" value="ECO:0007669"/>
    <property type="project" value="UniProtKB-KW"/>
</dbReference>
<dbReference type="GO" id="GO:0006688">
    <property type="term" value="P:glycosphingolipid biosynthetic process"/>
    <property type="evidence" value="ECO:0000315"/>
    <property type="project" value="CGD"/>
</dbReference>
<dbReference type="InterPro" id="IPR021988">
    <property type="entry name" value="BMT1"/>
</dbReference>
<dbReference type="Pfam" id="PF12141">
    <property type="entry name" value="BMT"/>
    <property type="match status" value="1"/>
</dbReference>
<name>BMT6_CANAL</name>
<organism>
    <name type="scientific">Candida albicans (strain SC5314 / ATCC MYA-2876)</name>
    <name type="common">Yeast</name>
    <dbReference type="NCBI Taxonomy" id="237561"/>
    <lineage>
        <taxon>Eukaryota</taxon>
        <taxon>Fungi</taxon>
        <taxon>Dikarya</taxon>
        <taxon>Ascomycota</taxon>
        <taxon>Saccharomycotina</taxon>
        <taxon>Pichiomycetes</taxon>
        <taxon>Debaryomycetaceae</taxon>
        <taxon>Candida/Lodderomyces clade</taxon>
        <taxon>Candida</taxon>
    </lineage>
</organism>
<keyword id="KW-0961">Cell wall biogenesis/degradation</keyword>
<keyword id="KW-0325">Glycoprotein</keyword>
<keyword id="KW-0328">Glycosyltransferase</keyword>
<keyword id="KW-0472">Membrane</keyword>
<keyword id="KW-1185">Reference proteome</keyword>
<keyword id="KW-0735">Signal-anchor</keyword>
<keyword id="KW-0808">Transferase</keyword>
<keyword id="KW-0812">Transmembrane</keyword>
<keyword id="KW-1133">Transmembrane helix</keyword>
<keyword id="KW-0843">Virulence</keyword>
<evidence type="ECO:0000255" key="1"/>
<evidence type="ECO:0000269" key="2">
    <source>
    </source>
</evidence>
<evidence type="ECO:0000269" key="3">
    <source>
    </source>
</evidence>
<evidence type="ECO:0000269" key="4">
    <source>
    </source>
</evidence>
<evidence type="ECO:0000305" key="5"/>